<protein>
    <recommendedName>
        <fullName>Satellite RNA 48 kDa protein</fullName>
    </recommendedName>
</protein>
<organism>
    <name type="scientific">Tomato black ring virus satellite RNA</name>
    <dbReference type="NCBI Taxonomy" id="196089"/>
    <lineage>
        <taxon>Viruses</taxon>
        <taxon>unclassified Satellites</taxon>
        <taxon>RNA satellites</taxon>
        <taxon>Single stranded RNA satellites</taxon>
        <taxon>Large single stranded RNA satellites</taxon>
    </lineage>
</organism>
<name>VS48_TBRVS</name>
<feature type="chain" id="PRO_0000105576" description="Satellite RNA 48 kDa protein">
    <location>
        <begin position="1"/>
        <end position="419"/>
    </location>
</feature>
<feature type="region of interest" description="Disordered" evidence="1">
    <location>
        <begin position="1"/>
        <end position="29"/>
    </location>
</feature>
<feature type="compositionally biased region" description="Basic residues" evidence="1">
    <location>
        <begin position="1"/>
        <end position="27"/>
    </location>
</feature>
<comment type="similarity">
    <text evidence="2">Belongs to the nepovirus satellite RNA 48 kDa protein family.</text>
</comment>
<accession>P22048</accession>
<sequence length="419" mass="47698">MQKTMTRHLSRNRKPHEKVSHVPRRGPRTYQDPCDPGWCVVNSCRRVAPQPIPTSGSLGRKPLNPGCPSRKWTEKIIAAPKHGFYSAKDHGYWVPKVKVQKKYNPLQKVVGGGKSYKDVLTTPATIQIKPTPESILLAQKIQNSTFKSRGKVTLSQEKIPLVNRFQELLIEKELMEEIEESQPFVANDPRAQHLICKKVPRKVGRREILVCPITNDESHLNLKSGIRAEIVDSMGSVVHAEKIAEYNRGHVVKSMRKRIVYERESKPIPIIGSFSDRAIRVSCDDHTDELASASSVPSEWKPSKNQRAVPCLLQNESGTVVSTKPDWYTPVKVCTHKQYMKVQRVFLDAMNIMRALRFHIDSKTLRETWVKCWLQVHKKNVAFPGWMIAPLLSGTVPCEQEFLLPRVNETRAFVTTCYA</sequence>
<reference key="1">
    <citation type="journal article" date="1987" name="J. Gen. Virol.">
        <title>Comparison of the nucleotide sequences of five tomato black ring virus satellite RNAs.</title>
        <authorList>
            <person name="Hemmer O."/>
            <person name="Meyer M."/>
            <person name="Greif C."/>
            <person name="Fritsch C."/>
        </authorList>
    </citation>
    <scope>NUCLEOTIDE SEQUENCE [GENOMIC RNA]</scope>
</reference>
<reference key="2">
    <citation type="submission" date="1988-02" db="EMBL/GenBank/DDBJ databases">
        <authorList>
            <person name="Fritsch C."/>
        </authorList>
    </citation>
    <scope>SEQUENCE REVISION</scope>
</reference>
<evidence type="ECO:0000256" key="1">
    <source>
        <dbReference type="SAM" id="MobiDB-lite"/>
    </source>
</evidence>
<evidence type="ECO:0000305" key="2"/>
<proteinExistence type="inferred from homology"/>
<dbReference type="EMBL" id="X05689">
    <property type="protein sequence ID" value="CAB59630.1"/>
    <property type="molecule type" value="Genomic_RNA"/>
</dbReference>
<dbReference type="PIR" id="C27169">
    <property type="entry name" value="SAVVTC"/>
</dbReference>
<dbReference type="RefSeq" id="NP_631950.1">
    <property type="nucleotide sequence ID" value="NC_003890.1"/>
</dbReference>
<dbReference type="SMR" id="P22048"/>
<dbReference type="GeneID" id="944491"/>
<dbReference type="KEGG" id="vg:944491"/>
<dbReference type="Proteomes" id="UP000201079">
    <property type="component" value="Genome"/>
</dbReference>
<dbReference type="InterPro" id="IPR035312">
    <property type="entry name" value="SatRNA_48"/>
</dbReference>
<dbReference type="Pfam" id="PF17485">
    <property type="entry name" value="SatRNA_48"/>
    <property type="match status" value="1"/>
</dbReference>